<evidence type="ECO:0000250" key="1">
    <source>
        <dbReference type="UniProtKB" id="P21875"/>
    </source>
</evidence>
<evidence type="ECO:0000255" key="2"/>
<evidence type="ECO:0000255" key="3">
    <source>
        <dbReference type="PROSITE-ProRule" id="PRU00303"/>
    </source>
</evidence>
<evidence type="ECO:0000256" key="4">
    <source>
        <dbReference type="SAM" id="MobiDB-lite"/>
    </source>
</evidence>
<evidence type="ECO:0000269" key="5">
    <source>
    </source>
</evidence>
<evidence type="ECO:0000269" key="6">
    <source>
    </source>
</evidence>
<evidence type="ECO:0000303" key="7">
    <source>
    </source>
</evidence>
<evidence type="ECO:0000303" key="8">
    <source>
    </source>
</evidence>
<evidence type="ECO:0000305" key="9"/>
<evidence type="ECO:0000305" key="10">
    <source>
    </source>
</evidence>
<evidence type="ECO:0000312" key="11">
    <source>
        <dbReference type="EMBL" id="AAA59221.1"/>
    </source>
</evidence>
<accession>Q45209</accession>
<organism>
    <name type="scientific">Borrelia hermsii</name>
    <dbReference type="NCBI Taxonomy" id="140"/>
    <lineage>
        <taxon>Bacteria</taxon>
        <taxon>Pseudomonadati</taxon>
        <taxon>Spirochaetota</taxon>
        <taxon>Spirochaetia</taxon>
        <taxon>Spirochaetales</taxon>
        <taxon>Borreliaceae</taxon>
        <taxon>Borrelia</taxon>
    </lineage>
</organism>
<protein>
    <recommendedName>
        <fullName evidence="8">Variable small protein 22</fullName>
    </recommendedName>
</protein>
<gene>
    <name evidence="8" type="primary">vsp22</name>
    <name evidence="7" type="synonym">vmp22</name>
</gene>
<feature type="signal peptide" evidence="3">
    <location>
        <begin position="1"/>
        <end position="18"/>
    </location>
</feature>
<feature type="chain" id="PRO_0000244515" description="Variable small protein 22" evidence="2">
    <location>
        <begin position="19"/>
        <end position="217"/>
    </location>
</feature>
<feature type="region of interest" description="Disordered" evidence="4">
    <location>
        <begin position="151"/>
        <end position="174"/>
    </location>
</feature>
<feature type="compositionally biased region" description="Basic and acidic residues" evidence="4">
    <location>
        <begin position="155"/>
        <end position="174"/>
    </location>
</feature>
<feature type="lipid moiety-binding region" description="N-palmitoyl cysteine" evidence="2 9">
    <location>
        <position position="19"/>
    </location>
</feature>
<feature type="lipid moiety-binding region" description="S-diacylglycerol cysteine" evidence="2 9">
    <location>
        <position position="19"/>
    </location>
</feature>
<reference evidence="11" key="1">
    <citation type="journal article" date="1994" name="Cell">
        <title>Antigen diversity in the bacterium B. hermsii through 'somatic' mutations in rearranged vmp genes.</title>
        <authorList>
            <person name="Restrepo B.I."/>
            <person name="Barbour A.G."/>
        </authorList>
    </citation>
    <scope>NUCLEOTIDE SEQUENCE [GENOMIC DNA]</scope>
    <source>
        <strain>ATCC 35209 / HS1</strain>
    </source>
</reference>
<reference evidence="9" key="2">
    <citation type="journal article" date="1998" name="Infect. Immun.">
        <title>Population structure of the relapsing fever spirochete Borrelia hermsii as indicated by polymorphism of two multigene families that encode immunogenic outer surface lipoproteins.</title>
        <authorList>
            <person name="Hinnebusch B.J."/>
            <person name="Barbour A.G."/>
            <person name="Restrepo B.I."/>
            <person name="Schwan T.G."/>
        </authorList>
    </citation>
    <scope>NOMENCLATURE</scope>
</reference>
<proteinExistence type="inferred from homology"/>
<sequence length="217" mass="22854">MRKRISAIIMTLFMVFMSCNNGGPELKSDEVAKSDGTVLDLAKVSKKIKEASAFAASVKEVETLVKSVDELAKAIGKKIKNDGTLEFADADKDKNGSLIAGAFQIILIAEGKLKGLDKEAGISEALKAKVTDAEAKSKAFLAKVKGQTATLGKNDASDDDTKKAIKKDNSDKTKGASELEALNTAVDALLKAAEGEVEAAIKELTAPVKAEKPSQNN</sequence>
<name>VSP22_BORHE</name>
<dbReference type="EMBL" id="L33902">
    <property type="protein sequence ID" value="AAA59221.1"/>
    <property type="molecule type" value="Genomic_DNA"/>
</dbReference>
<dbReference type="SMR" id="Q45209"/>
<dbReference type="GO" id="GO:0009279">
    <property type="term" value="C:cell outer membrane"/>
    <property type="evidence" value="ECO:0007669"/>
    <property type="project" value="UniProtKB-SubCell"/>
</dbReference>
<dbReference type="Gene3D" id="1.20.120.240">
    <property type="entry name" value="Lipoprotein, type 6"/>
    <property type="match status" value="1"/>
</dbReference>
<dbReference type="InterPro" id="IPR001800">
    <property type="entry name" value="Lipoprotein_OspC"/>
</dbReference>
<dbReference type="InterPro" id="IPR036437">
    <property type="entry name" value="OspC-like_sf"/>
</dbReference>
<dbReference type="Pfam" id="PF01441">
    <property type="entry name" value="Lipoprotein_6"/>
    <property type="match status" value="1"/>
</dbReference>
<dbReference type="SUPFAM" id="SSF63515">
    <property type="entry name" value="Outer surface protein C (OspC)"/>
    <property type="match status" value="1"/>
</dbReference>
<dbReference type="PROSITE" id="PS51257">
    <property type="entry name" value="PROKAR_LIPOPROTEIN"/>
    <property type="match status" value="1"/>
</dbReference>
<comment type="function">
    <text evidence="1">The Vlp and Vsp proteins are antigenically distinct proteins, only one vlp or vsp gene is transcriptionally active at any one time. Switching between these genes is a mechanism of host immune response evasion.</text>
</comment>
<comment type="subcellular location">
    <subcellularLocation>
        <location evidence="1">Cell outer membrane</location>
        <topology>Lipid-anchor</topology>
    </subcellularLocation>
</comment>
<comment type="miscellaneous">
    <text evidence="10">Genes for both Vlp and Vsp families are on (usually) unnamed linear plasmids in B.hermsii HS1.</text>
</comment>
<comment type="similarity">
    <text evidence="6">Belongs to the variable small protein (Vsp) family.</text>
</comment>
<keyword id="KW-0998">Cell outer membrane</keyword>
<keyword id="KW-0449">Lipoprotein</keyword>
<keyword id="KW-0472">Membrane</keyword>
<keyword id="KW-0564">Palmitate</keyword>
<keyword id="KW-0614">Plasmid</keyword>
<keyword id="KW-0732">Signal</keyword>
<geneLocation type="plasmid" evidence="5"/>